<keyword id="KW-1185">Reference proteome</keyword>
<keyword id="KW-0687">Ribonucleoprotein</keyword>
<keyword id="KW-0689">Ribosomal protein</keyword>
<keyword id="KW-0694">RNA-binding</keyword>
<keyword id="KW-0699">rRNA-binding</keyword>
<sequence>MKLSRKESVQRRHRRIRKKVNGTPNCPRLAVFRSNLHIYAQIIDDVGQHTIAAASTVEPDLKKSLSSGSTCEASAAVGKLVAERALAQGIEQVVFDRGGNLYHGRVKALADAAREAGLQF</sequence>
<comment type="function">
    <text evidence="1">This is one of the proteins that bind and probably mediate the attachment of the 5S RNA into the large ribosomal subunit, where it forms part of the central protuberance.</text>
</comment>
<comment type="subunit">
    <text evidence="1">Part of the 50S ribosomal subunit; part of the 5S rRNA/L5/L18/L25 subcomplex. Contacts the 5S and 23S rRNAs.</text>
</comment>
<comment type="similarity">
    <text evidence="1">Belongs to the universal ribosomal protein uL18 family.</text>
</comment>
<protein>
    <recommendedName>
        <fullName evidence="1">Large ribosomal subunit protein uL18</fullName>
    </recommendedName>
    <alternativeName>
        <fullName evidence="2">50S ribosomal protein L18</fullName>
    </alternativeName>
</protein>
<name>RL18_RIPO1</name>
<dbReference type="EMBL" id="CP001287">
    <property type="protein sequence ID" value="ACK64340.1"/>
    <property type="molecule type" value="Genomic_DNA"/>
</dbReference>
<dbReference type="RefSeq" id="WP_012593617.1">
    <property type="nucleotide sequence ID" value="NC_011726.1"/>
</dbReference>
<dbReference type="SMR" id="B7K233"/>
<dbReference type="STRING" id="41431.PCC8801_0237"/>
<dbReference type="KEGG" id="cyp:PCC8801_0237"/>
<dbReference type="eggNOG" id="COG0256">
    <property type="taxonomic scope" value="Bacteria"/>
</dbReference>
<dbReference type="HOGENOM" id="CLU_098841_0_1_3"/>
<dbReference type="OrthoDB" id="9810939at2"/>
<dbReference type="Proteomes" id="UP000008204">
    <property type="component" value="Chromosome"/>
</dbReference>
<dbReference type="GO" id="GO:0022625">
    <property type="term" value="C:cytosolic large ribosomal subunit"/>
    <property type="evidence" value="ECO:0007669"/>
    <property type="project" value="TreeGrafter"/>
</dbReference>
<dbReference type="GO" id="GO:0008097">
    <property type="term" value="F:5S rRNA binding"/>
    <property type="evidence" value="ECO:0007669"/>
    <property type="project" value="TreeGrafter"/>
</dbReference>
<dbReference type="GO" id="GO:0003735">
    <property type="term" value="F:structural constituent of ribosome"/>
    <property type="evidence" value="ECO:0007669"/>
    <property type="project" value="InterPro"/>
</dbReference>
<dbReference type="GO" id="GO:0006412">
    <property type="term" value="P:translation"/>
    <property type="evidence" value="ECO:0007669"/>
    <property type="project" value="UniProtKB-UniRule"/>
</dbReference>
<dbReference type="CDD" id="cd00432">
    <property type="entry name" value="Ribosomal_L18_L5e"/>
    <property type="match status" value="1"/>
</dbReference>
<dbReference type="FunFam" id="3.30.420.100:FF:000001">
    <property type="entry name" value="50S ribosomal protein L18"/>
    <property type="match status" value="1"/>
</dbReference>
<dbReference type="Gene3D" id="3.30.420.100">
    <property type="match status" value="1"/>
</dbReference>
<dbReference type="HAMAP" id="MF_01337_B">
    <property type="entry name" value="Ribosomal_uL18_B"/>
    <property type="match status" value="1"/>
</dbReference>
<dbReference type="InterPro" id="IPR004389">
    <property type="entry name" value="Ribosomal_uL18_bac-type"/>
</dbReference>
<dbReference type="InterPro" id="IPR005484">
    <property type="entry name" value="Ribosomal_uL18_bac/euk"/>
</dbReference>
<dbReference type="NCBIfam" id="TIGR00060">
    <property type="entry name" value="L18_bact"/>
    <property type="match status" value="1"/>
</dbReference>
<dbReference type="PANTHER" id="PTHR12899">
    <property type="entry name" value="39S RIBOSOMAL PROTEIN L18, MITOCHONDRIAL"/>
    <property type="match status" value="1"/>
</dbReference>
<dbReference type="PANTHER" id="PTHR12899:SF3">
    <property type="entry name" value="LARGE RIBOSOMAL SUBUNIT PROTEIN UL18M"/>
    <property type="match status" value="1"/>
</dbReference>
<dbReference type="Pfam" id="PF00861">
    <property type="entry name" value="Ribosomal_L18p"/>
    <property type="match status" value="1"/>
</dbReference>
<dbReference type="SUPFAM" id="SSF53137">
    <property type="entry name" value="Translational machinery components"/>
    <property type="match status" value="1"/>
</dbReference>
<proteinExistence type="inferred from homology"/>
<reference key="1">
    <citation type="journal article" date="2011" name="MBio">
        <title>Novel metabolic attributes of the genus Cyanothece, comprising a group of unicellular nitrogen-fixing Cyanobacteria.</title>
        <authorList>
            <person name="Bandyopadhyay A."/>
            <person name="Elvitigala T."/>
            <person name="Welsh E."/>
            <person name="Stockel J."/>
            <person name="Liberton M."/>
            <person name="Min H."/>
            <person name="Sherman L.A."/>
            <person name="Pakrasi H.B."/>
        </authorList>
    </citation>
    <scope>NUCLEOTIDE SEQUENCE [LARGE SCALE GENOMIC DNA]</scope>
    <source>
        <strain>PCC 8801 / RF-1</strain>
    </source>
</reference>
<organism>
    <name type="scientific">Rippkaea orientalis (strain PCC 8801 / RF-1)</name>
    <name type="common">Cyanothece sp. (strain PCC 8801)</name>
    <dbReference type="NCBI Taxonomy" id="41431"/>
    <lineage>
        <taxon>Bacteria</taxon>
        <taxon>Bacillati</taxon>
        <taxon>Cyanobacteriota</taxon>
        <taxon>Cyanophyceae</taxon>
        <taxon>Oscillatoriophycideae</taxon>
        <taxon>Chroococcales</taxon>
        <taxon>Aphanothecaceae</taxon>
        <taxon>Rippkaea</taxon>
        <taxon>Rippkaea orientalis</taxon>
    </lineage>
</organism>
<feature type="chain" id="PRO_1000142650" description="Large ribosomal subunit protein uL18">
    <location>
        <begin position="1"/>
        <end position="120"/>
    </location>
</feature>
<gene>
    <name evidence="1" type="primary">rplR</name>
    <name evidence="1" type="synonym">rpl18</name>
    <name type="ordered locus">PCC8801_0237</name>
</gene>
<evidence type="ECO:0000255" key="1">
    <source>
        <dbReference type="HAMAP-Rule" id="MF_01337"/>
    </source>
</evidence>
<evidence type="ECO:0000305" key="2"/>
<accession>B7K233</accession>